<evidence type="ECO:0000255" key="1">
    <source>
        <dbReference type="PROSITE-ProRule" id="PRU00034"/>
    </source>
</evidence>
<evidence type="ECO:0000256" key="2">
    <source>
        <dbReference type="SAM" id="MobiDB-lite"/>
    </source>
</evidence>
<evidence type="ECO:0000269" key="3">
    <source>
    </source>
</evidence>
<evidence type="ECO:0000303" key="4">
    <source>
    </source>
</evidence>
<evidence type="ECO:0000305" key="5"/>
<evidence type="ECO:0000312" key="6">
    <source>
        <dbReference type="FlyBase" id="FBgn0038585"/>
    </source>
</evidence>
<organism>
    <name type="scientific">Drosophila melanogaster</name>
    <name type="common">Fruit fly</name>
    <dbReference type="NCBI Taxonomy" id="7227"/>
    <lineage>
        <taxon>Eukaryota</taxon>
        <taxon>Metazoa</taxon>
        <taxon>Ecdysozoa</taxon>
        <taxon>Arthropoda</taxon>
        <taxon>Hexapoda</taxon>
        <taxon>Insecta</taxon>
        <taxon>Pterygota</taxon>
        <taxon>Neoptera</taxon>
        <taxon>Endopterygota</taxon>
        <taxon>Diptera</taxon>
        <taxon>Brachycera</taxon>
        <taxon>Muscomorpha</taxon>
        <taxon>Ephydroidea</taxon>
        <taxon>Drosophilidae</taxon>
        <taxon>Drosophila</taxon>
        <taxon>Sophophora</taxon>
    </lineage>
</organism>
<comment type="function">
    <text evidence="3">Required for normal assembly of the mitotic spindle. May be involved in both centrosome-dependent and centrosome-independent spindle assembly programs.</text>
</comment>
<comment type="subcellular location">
    <subcellularLocation>
        <location evidence="3">Nucleus</location>
        <location evidence="3">Nucleolus</location>
    </subcellularLocation>
    <text evidence="3">Found in the nucleolus during interphase.</text>
</comment>
<comment type="similarity">
    <text evidence="5">Belongs to the RPF2 family.</text>
</comment>
<accession>Q9VEB3</accession>
<accession>Q95U84</accession>
<sequence length="320" mass="36498">MSLLRIRKPKTRKGKKVLLAREPQLIESARTMLFLDGRKCGGNVKLCMKDLQALKKPLVKVLNRKNDITPFDDPSSLEFLTMKNDAALFTFGSTSKKRPDNIILGRIFENEVLDMFELGIKRYQAISEFKNEKIGACVKPCLVFNGPKWAQTEELRRLRNLFIDTFQREKVDSIRLQGIEHVLSFTVTDDMNILMRSYRILLKKSGQRTPRIELEEIGPSADFSIRRTKIASEDLYKQARKQPKQLKVGKKKNISTDALGNTKGRVHLGKQQTGSIQTRRVKALRKTPEEKKENRQRKKVALKAAAAEALASQGNNPFSS</sequence>
<reference key="1">
    <citation type="journal article" date="2000" name="Science">
        <title>The genome sequence of Drosophila melanogaster.</title>
        <authorList>
            <person name="Adams M.D."/>
            <person name="Celniker S.E."/>
            <person name="Holt R.A."/>
            <person name="Evans C.A."/>
            <person name="Gocayne J.D."/>
            <person name="Amanatides P.G."/>
            <person name="Scherer S.E."/>
            <person name="Li P.W."/>
            <person name="Hoskins R.A."/>
            <person name="Galle R.F."/>
            <person name="George R.A."/>
            <person name="Lewis S.E."/>
            <person name="Richards S."/>
            <person name="Ashburner M."/>
            <person name="Henderson S.N."/>
            <person name="Sutton G.G."/>
            <person name="Wortman J.R."/>
            <person name="Yandell M.D."/>
            <person name="Zhang Q."/>
            <person name="Chen L.X."/>
            <person name="Brandon R.C."/>
            <person name="Rogers Y.-H.C."/>
            <person name="Blazej R.G."/>
            <person name="Champe M."/>
            <person name="Pfeiffer B.D."/>
            <person name="Wan K.H."/>
            <person name="Doyle C."/>
            <person name="Baxter E.G."/>
            <person name="Helt G."/>
            <person name="Nelson C.R."/>
            <person name="Miklos G.L.G."/>
            <person name="Abril J.F."/>
            <person name="Agbayani A."/>
            <person name="An H.-J."/>
            <person name="Andrews-Pfannkoch C."/>
            <person name="Baldwin D."/>
            <person name="Ballew R.M."/>
            <person name="Basu A."/>
            <person name="Baxendale J."/>
            <person name="Bayraktaroglu L."/>
            <person name="Beasley E.M."/>
            <person name="Beeson K.Y."/>
            <person name="Benos P.V."/>
            <person name="Berman B.P."/>
            <person name="Bhandari D."/>
            <person name="Bolshakov S."/>
            <person name="Borkova D."/>
            <person name="Botchan M.R."/>
            <person name="Bouck J."/>
            <person name="Brokstein P."/>
            <person name="Brottier P."/>
            <person name="Burtis K.C."/>
            <person name="Busam D.A."/>
            <person name="Butler H."/>
            <person name="Cadieu E."/>
            <person name="Center A."/>
            <person name="Chandra I."/>
            <person name="Cherry J.M."/>
            <person name="Cawley S."/>
            <person name="Dahlke C."/>
            <person name="Davenport L.B."/>
            <person name="Davies P."/>
            <person name="de Pablos B."/>
            <person name="Delcher A."/>
            <person name="Deng Z."/>
            <person name="Mays A.D."/>
            <person name="Dew I."/>
            <person name="Dietz S.M."/>
            <person name="Dodson K."/>
            <person name="Doup L.E."/>
            <person name="Downes M."/>
            <person name="Dugan-Rocha S."/>
            <person name="Dunkov B.C."/>
            <person name="Dunn P."/>
            <person name="Durbin K.J."/>
            <person name="Evangelista C.C."/>
            <person name="Ferraz C."/>
            <person name="Ferriera S."/>
            <person name="Fleischmann W."/>
            <person name="Fosler C."/>
            <person name="Gabrielian A.E."/>
            <person name="Garg N.S."/>
            <person name="Gelbart W.M."/>
            <person name="Glasser K."/>
            <person name="Glodek A."/>
            <person name="Gong F."/>
            <person name="Gorrell J.H."/>
            <person name="Gu Z."/>
            <person name="Guan P."/>
            <person name="Harris M."/>
            <person name="Harris N.L."/>
            <person name="Harvey D.A."/>
            <person name="Heiman T.J."/>
            <person name="Hernandez J.R."/>
            <person name="Houck J."/>
            <person name="Hostin D."/>
            <person name="Houston K.A."/>
            <person name="Howland T.J."/>
            <person name="Wei M.-H."/>
            <person name="Ibegwam C."/>
            <person name="Jalali M."/>
            <person name="Kalush F."/>
            <person name="Karpen G.H."/>
            <person name="Ke Z."/>
            <person name="Kennison J.A."/>
            <person name="Ketchum K.A."/>
            <person name="Kimmel B.E."/>
            <person name="Kodira C.D."/>
            <person name="Kraft C.L."/>
            <person name="Kravitz S."/>
            <person name="Kulp D."/>
            <person name="Lai Z."/>
            <person name="Lasko P."/>
            <person name="Lei Y."/>
            <person name="Levitsky A.A."/>
            <person name="Li J.H."/>
            <person name="Li Z."/>
            <person name="Liang Y."/>
            <person name="Lin X."/>
            <person name="Liu X."/>
            <person name="Mattei B."/>
            <person name="McIntosh T.C."/>
            <person name="McLeod M.P."/>
            <person name="McPherson D."/>
            <person name="Merkulov G."/>
            <person name="Milshina N.V."/>
            <person name="Mobarry C."/>
            <person name="Morris J."/>
            <person name="Moshrefi A."/>
            <person name="Mount S.M."/>
            <person name="Moy M."/>
            <person name="Murphy B."/>
            <person name="Murphy L."/>
            <person name="Muzny D.M."/>
            <person name="Nelson D.L."/>
            <person name="Nelson D.R."/>
            <person name="Nelson K.A."/>
            <person name="Nixon K."/>
            <person name="Nusskern D.R."/>
            <person name="Pacleb J.M."/>
            <person name="Palazzolo M."/>
            <person name="Pittman G.S."/>
            <person name="Pan S."/>
            <person name="Pollard J."/>
            <person name="Puri V."/>
            <person name="Reese M.G."/>
            <person name="Reinert K."/>
            <person name="Remington K."/>
            <person name="Saunders R.D.C."/>
            <person name="Scheeler F."/>
            <person name="Shen H."/>
            <person name="Shue B.C."/>
            <person name="Siden-Kiamos I."/>
            <person name="Simpson M."/>
            <person name="Skupski M.P."/>
            <person name="Smith T.J."/>
            <person name="Spier E."/>
            <person name="Spradling A.C."/>
            <person name="Stapleton M."/>
            <person name="Strong R."/>
            <person name="Sun E."/>
            <person name="Svirskas R."/>
            <person name="Tector C."/>
            <person name="Turner R."/>
            <person name="Venter E."/>
            <person name="Wang A.H."/>
            <person name="Wang X."/>
            <person name="Wang Z.-Y."/>
            <person name="Wassarman D.A."/>
            <person name="Weinstock G.M."/>
            <person name="Weissenbach J."/>
            <person name="Williams S.M."/>
            <person name="Woodage T."/>
            <person name="Worley K.C."/>
            <person name="Wu D."/>
            <person name="Yang S."/>
            <person name="Yao Q.A."/>
            <person name="Ye J."/>
            <person name="Yeh R.-F."/>
            <person name="Zaveri J.S."/>
            <person name="Zhan M."/>
            <person name="Zhang G."/>
            <person name="Zhao Q."/>
            <person name="Zheng L."/>
            <person name="Zheng X.H."/>
            <person name="Zhong F.N."/>
            <person name="Zhong W."/>
            <person name="Zhou X."/>
            <person name="Zhu S.C."/>
            <person name="Zhu X."/>
            <person name="Smith H.O."/>
            <person name="Gibbs R.A."/>
            <person name="Myers E.W."/>
            <person name="Rubin G.M."/>
            <person name="Venter J.C."/>
        </authorList>
    </citation>
    <scope>NUCLEOTIDE SEQUENCE [LARGE SCALE GENOMIC DNA]</scope>
    <source>
        <strain>Berkeley</strain>
    </source>
</reference>
<reference key="2">
    <citation type="journal article" date="2002" name="Genome Biol.">
        <title>Annotation of the Drosophila melanogaster euchromatic genome: a systematic review.</title>
        <authorList>
            <person name="Misra S."/>
            <person name="Crosby M.A."/>
            <person name="Mungall C.J."/>
            <person name="Matthews B.B."/>
            <person name="Campbell K.S."/>
            <person name="Hradecky P."/>
            <person name="Huang Y."/>
            <person name="Kaminker J.S."/>
            <person name="Millburn G.H."/>
            <person name="Prochnik S.E."/>
            <person name="Smith C.D."/>
            <person name="Tupy J.L."/>
            <person name="Whitfield E.J."/>
            <person name="Bayraktaroglu L."/>
            <person name="Berman B.P."/>
            <person name="Bettencourt B.R."/>
            <person name="Celniker S.E."/>
            <person name="de Grey A.D.N.J."/>
            <person name="Drysdale R.A."/>
            <person name="Harris N.L."/>
            <person name="Richter J."/>
            <person name="Russo S."/>
            <person name="Schroeder A.J."/>
            <person name="Shu S.Q."/>
            <person name="Stapleton M."/>
            <person name="Yamada C."/>
            <person name="Ashburner M."/>
            <person name="Gelbart W.M."/>
            <person name="Rubin G.M."/>
            <person name="Lewis S.E."/>
        </authorList>
    </citation>
    <scope>GENOME REANNOTATION</scope>
    <source>
        <strain>Berkeley</strain>
    </source>
</reference>
<reference key="3">
    <citation type="journal article" date="2002" name="Genome Biol.">
        <title>A Drosophila full-length cDNA resource.</title>
        <authorList>
            <person name="Stapleton M."/>
            <person name="Carlson J.W."/>
            <person name="Brokstein P."/>
            <person name="Yu C."/>
            <person name="Champe M."/>
            <person name="George R.A."/>
            <person name="Guarin H."/>
            <person name="Kronmiller B."/>
            <person name="Pacleb J.M."/>
            <person name="Park S."/>
            <person name="Wan K.H."/>
            <person name="Rubin G.M."/>
            <person name="Celniker S.E."/>
        </authorList>
    </citation>
    <scope>NUCLEOTIDE SEQUENCE [LARGE SCALE MRNA]</scope>
    <source>
        <strain>Berkeley</strain>
        <tissue>Head</tissue>
    </source>
</reference>
<reference key="4">
    <citation type="journal article" date="2013" name="Proc. Natl. Acad. Sci. U.S.A.">
        <title>Genes involved in centrosome-independent mitotic spindle assembly in Drosophila S2 cells.</title>
        <authorList>
            <person name="Moutinho-Pereira S."/>
            <person name="Stuurman N."/>
            <person name="Afonso O."/>
            <person name="Hornsveld M."/>
            <person name="Aguiar P."/>
            <person name="Goshima G."/>
            <person name="Vale R.D."/>
            <person name="Maiato H."/>
        </authorList>
    </citation>
    <scope>FUNCTION</scope>
    <scope>SUBCELLULAR LOCATION</scope>
</reference>
<dbReference type="EMBL" id="AE014297">
    <property type="protein sequence ID" value="AAF55514.2"/>
    <property type="molecule type" value="Genomic_DNA"/>
</dbReference>
<dbReference type="EMBL" id="AY058248">
    <property type="protein sequence ID" value="AAL13477.1"/>
    <property type="molecule type" value="mRNA"/>
</dbReference>
<dbReference type="RefSeq" id="NP_650694.2">
    <property type="nucleotide sequence ID" value="NM_142437.3"/>
</dbReference>
<dbReference type="SMR" id="Q9VEB3"/>
<dbReference type="BioGRID" id="67204">
    <property type="interactions" value="8"/>
</dbReference>
<dbReference type="FunCoup" id="Q9VEB3">
    <property type="interactions" value="1458"/>
</dbReference>
<dbReference type="IntAct" id="Q9VEB3">
    <property type="interactions" value="31"/>
</dbReference>
<dbReference type="STRING" id="7227.FBpp0082984"/>
<dbReference type="PaxDb" id="7227-FBpp0082984"/>
<dbReference type="EnsemblMetazoa" id="FBtr0083562">
    <property type="protein sequence ID" value="FBpp0082984"/>
    <property type="gene ID" value="FBgn0038585"/>
</dbReference>
<dbReference type="GeneID" id="42183"/>
<dbReference type="KEGG" id="dme:Dmel_CG7993"/>
<dbReference type="UCSC" id="CG7993-RA">
    <property type="organism name" value="d. melanogaster"/>
</dbReference>
<dbReference type="AGR" id="FB:FBgn0038585"/>
<dbReference type="CTD" id="42183"/>
<dbReference type="FlyBase" id="FBgn0038585">
    <property type="gene designation" value="Non3"/>
</dbReference>
<dbReference type="VEuPathDB" id="VectorBase:FBgn0038585"/>
<dbReference type="eggNOG" id="KOG3031">
    <property type="taxonomic scope" value="Eukaryota"/>
</dbReference>
<dbReference type="GeneTree" id="ENSGT00390000007279"/>
<dbReference type="HOGENOM" id="CLU_049783_1_1_1"/>
<dbReference type="InParanoid" id="Q9VEB3"/>
<dbReference type="OMA" id="VGLKPMF"/>
<dbReference type="OrthoDB" id="407658at2759"/>
<dbReference type="PhylomeDB" id="Q9VEB3"/>
<dbReference type="BioGRID-ORCS" id="42183">
    <property type="hits" value="1 hit in 1 CRISPR screen"/>
</dbReference>
<dbReference type="GenomeRNAi" id="42183"/>
<dbReference type="PRO" id="PR:Q9VEB3"/>
<dbReference type="Proteomes" id="UP000000803">
    <property type="component" value="Chromosome 3R"/>
</dbReference>
<dbReference type="Bgee" id="FBgn0038585">
    <property type="expression patterns" value="Expressed in adult abdomen and 113 other cell types or tissues"/>
</dbReference>
<dbReference type="ExpressionAtlas" id="Q9VEB3">
    <property type="expression patterns" value="baseline and differential"/>
</dbReference>
<dbReference type="GO" id="GO:0005730">
    <property type="term" value="C:nucleolus"/>
    <property type="evidence" value="ECO:0000314"/>
    <property type="project" value="FlyBase"/>
</dbReference>
<dbReference type="GO" id="GO:0019843">
    <property type="term" value="F:rRNA binding"/>
    <property type="evidence" value="ECO:0000318"/>
    <property type="project" value="GO_Central"/>
</dbReference>
<dbReference type="GO" id="GO:0051301">
    <property type="term" value="P:cell division"/>
    <property type="evidence" value="ECO:0007669"/>
    <property type="project" value="UniProtKB-KW"/>
</dbReference>
<dbReference type="GO" id="GO:0000463">
    <property type="term" value="P:maturation of LSU-rRNA from tricistronic rRNA transcript (SSU-rRNA, 5.8S rRNA, LSU-rRNA)"/>
    <property type="evidence" value="ECO:0000318"/>
    <property type="project" value="GO_Central"/>
</dbReference>
<dbReference type="GO" id="GO:0000027">
    <property type="term" value="P:ribosomal large subunit assembly"/>
    <property type="evidence" value="ECO:0007669"/>
    <property type="project" value="InterPro"/>
</dbReference>
<dbReference type="InterPro" id="IPR007109">
    <property type="entry name" value="Brix"/>
</dbReference>
<dbReference type="InterPro" id="IPR039770">
    <property type="entry name" value="Rpf2"/>
</dbReference>
<dbReference type="PANTHER" id="PTHR12728">
    <property type="entry name" value="BRIX DOMAIN CONTAINING PROTEIN"/>
    <property type="match status" value="1"/>
</dbReference>
<dbReference type="PANTHER" id="PTHR12728:SF0">
    <property type="entry name" value="RIBOSOME PRODUCTION FACTOR 2 HOMOLOG"/>
    <property type="match status" value="1"/>
</dbReference>
<dbReference type="Pfam" id="PF04427">
    <property type="entry name" value="Brix"/>
    <property type="match status" value="1"/>
</dbReference>
<dbReference type="SMART" id="SM00879">
    <property type="entry name" value="Brix"/>
    <property type="match status" value="1"/>
</dbReference>
<dbReference type="PROSITE" id="PS50833">
    <property type="entry name" value="BRIX"/>
    <property type="match status" value="1"/>
</dbReference>
<protein>
    <recommendedName>
        <fullName>Ribosome production factor 2 homolog</fullName>
    </recommendedName>
    <alternativeName>
        <fullName>Brix domain-containing protein 1 homolog</fullName>
    </alternativeName>
    <alternativeName>
        <fullName evidence="4">Novel nucleolar protein 3</fullName>
    </alternativeName>
    <alternativeName>
        <fullName>Ribosome biogenesis protein RPF2 homolog</fullName>
    </alternativeName>
</protein>
<feature type="chain" id="PRO_0000120226" description="Ribosome production factor 2 homolog">
    <location>
        <begin position="1"/>
        <end position="320"/>
    </location>
</feature>
<feature type="domain" description="Brix" evidence="1">
    <location>
        <begin position="30"/>
        <end position="234"/>
    </location>
</feature>
<feature type="region of interest" description="Disordered" evidence="2">
    <location>
        <begin position="268"/>
        <end position="320"/>
    </location>
</feature>
<feature type="compositionally biased region" description="Low complexity" evidence="2">
    <location>
        <begin position="302"/>
        <end position="311"/>
    </location>
</feature>
<feature type="sequence conflict" description="In Ref. 3; AAL13477." evidence="5" ref="3">
    <original>T</original>
    <variation>I</variation>
    <location>
        <position position="188"/>
    </location>
</feature>
<keyword id="KW-0131">Cell cycle</keyword>
<keyword id="KW-0132">Cell division</keyword>
<keyword id="KW-0498">Mitosis</keyword>
<keyword id="KW-0539">Nucleus</keyword>
<keyword id="KW-1185">Reference proteome</keyword>
<gene>
    <name evidence="6" type="primary">Non3</name>
    <name evidence="6" type="ORF">CG7993</name>
</gene>
<name>RPF2_DROME</name>
<proteinExistence type="evidence at transcript level"/>